<keyword id="KW-0007">Acetylation</keyword>
<keyword id="KW-0117">Actin capping</keyword>
<keyword id="KW-0009">Actin-binding</keyword>
<keyword id="KW-0597">Phosphoprotein</keyword>
<evidence type="ECO:0000250" key="1"/>
<evidence type="ECO:0000250" key="2">
    <source>
        <dbReference type="UniProtKB" id="P47755"/>
    </source>
</evidence>
<evidence type="ECO:0000305" key="3"/>
<comment type="function">
    <text evidence="1">F-actin-capping proteins bind in a Ca(2+)-independent manner to the fast growing ends of actin filaments (barbed end) thereby blocking the exchange of subunits at these ends. Unlike other capping proteins (such as gelsolin and severin), these proteins do not sever actin filaments (By similarity).</text>
</comment>
<comment type="subunit">
    <text evidence="1 2">Component of the F-actin capping complex, composed of a heterodimer of an alpha and a beta subunit. Component of the WASH complex, composed of F-actin-capping protein subunit alpha (CAPZA1, CAPZA2 or CAPZA3), F-actin-capping protein subunit beta (CAPZB), WASHC1, WASHC2, WASHC3, WASHC4 and WASHC5. Interacts with RCSD1/CAPZIP (By similarity). Directly interacts with CRACD; this interaction decreases binding to actin (By similarity).</text>
</comment>
<comment type="similarity">
    <text evidence="3">Belongs to the F-actin-capping protein alpha subunit family.</text>
</comment>
<protein>
    <recommendedName>
        <fullName>F-actin-capping protein subunit alpha-2</fullName>
    </recommendedName>
    <alternativeName>
        <fullName>CapZ alpha-2</fullName>
    </alternativeName>
</protein>
<organism>
    <name type="scientific">Ateles geoffroyi</name>
    <name type="common">Black-handed spider monkey</name>
    <name type="synonym">Geoffroy's spider monkey</name>
    <dbReference type="NCBI Taxonomy" id="9509"/>
    <lineage>
        <taxon>Eukaryota</taxon>
        <taxon>Metazoa</taxon>
        <taxon>Chordata</taxon>
        <taxon>Craniata</taxon>
        <taxon>Vertebrata</taxon>
        <taxon>Euteleostomi</taxon>
        <taxon>Mammalia</taxon>
        <taxon>Eutheria</taxon>
        <taxon>Euarchontoglires</taxon>
        <taxon>Primates</taxon>
        <taxon>Haplorrhini</taxon>
        <taxon>Platyrrhini</taxon>
        <taxon>Atelidae</taxon>
        <taxon>Atelinae</taxon>
        <taxon>Ateles</taxon>
    </lineage>
</organism>
<dbReference type="EMBL" id="DP000177">
    <property type="protein sequence ID" value="ABI75270.1"/>
    <property type="molecule type" value="Genomic_DNA"/>
</dbReference>
<dbReference type="SMR" id="Q09YL0"/>
<dbReference type="OrthoDB" id="340550at2759"/>
<dbReference type="GO" id="GO:0030863">
    <property type="term" value="C:cortical cytoskeleton"/>
    <property type="evidence" value="ECO:0007669"/>
    <property type="project" value="TreeGrafter"/>
</dbReference>
<dbReference type="GO" id="GO:0008290">
    <property type="term" value="C:F-actin capping protein complex"/>
    <property type="evidence" value="ECO:0007669"/>
    <property type="project" value="InterPro"/>
</dbReference>
<dbReference type="GO" id="GO:0051015">
    <property type="term" value="F:actin filament binding"/>
    <property type="evidence" value="ECO:0007669"/>
    <property type="project" value="TreeGrafter"/>
</dbReference>
<dbReference type="GO" id="GO:0030036">
    <property type="term" value="P:actin cytoskeleton organization"/>
    <property type="evidence" value="ECO:0007669"/>
    <property type="project" value="TreeGrafter"/>
</dbReference>
<dbReference type="GO" id="GO:0051016">
    <property type="term" value="P:barbed-end actin filament capping"/>
    <property type="evidence" value="ECO:0007669"/>
    <property type="project" value="InterPro"/>
</dbReference>
<dbReference type="FunFam" id="3.30.1140.60:FF:000001">
    <property type="entry name" value="F-actin-capping protein subunit alpha"/>
    <property type="match status" value="1"/>
</dbReference>
<dbReference type="FunFam" id="3.90.1150.210:FF:000002">
    <property type="entry name" value="F-actin-capping protein subunit alpha"/>
    <property type="match status" value="1"/>
</dbReference>
<dbReference type="Gene3D" id="3.30.1140.60">
    <property type="entry name" value="F-actin capping protein, alpha subunit"/>
    <property type="match status" value="1"/>
</dbReference>
<dbReference type="Gene3D" id="3.90.1150.210">
    <property type="entry name" value="F-actin capping protein, beta subunit"/>
    <property type="match status" value="1"/>
</dbReference>
<dbReference type="InterPro" id="IPR002189">
    <property type="entry name" value="CapZ_alpha"/>
</dbReference>
<dbReference type="InterPro" id="IPR037282">
    <property type="entry name" value="CapZ_alpha/beta"/>
</dbReference>
<dbReference type="InterPro" id="IPR042276">
    <property type="entry name" value="CapZ_alpha/beta_2"/>
</dbReference>
<dbReference type="InterPro" id="IPR042489">
    <property type="entry name" value="CapZ_alpha_1"/>
</dbReference>
<dbReference type="InterPro" id="IPR017865">
    <property type="entry name" value="F-actin_cap_asu_CS"/>
</dbReference>
<dbReference type="PANTHER" id="PTHR10653">
    <property type="entry name" value="F-ACTIN-CAPPING PROTEIN SUBUNIT ALPHA"/>
    <property type="match status" value="1"/>
</dbReference>
<dbReference type="PANTHER" id="PTHR10653:SF2">
    <property type="entry name" value="F-ACTIN-CAPPING PROTEIN SUBUNIT ALPHA-2"/>
    <property type="match status" value="1"/>
</dbReference>
<dbReference type="Pfam" id="PF01267">
    <property type="entry name" value="F-actin_cap_A"/>
    <property type="match status" value="1"/>
</dbReference>
<dbReference type="PRINTS" id="PR00191">
    <property type="entry name" value="FACTINCAPA"/>
</dbReference>
<dbReference type="SUPFAM" id="SSF90096">
    <property type="entry name" value="Subunits of heterodimeric actin filament capping protein Capz"/>
    <property type="match status" value="1"/>
</dbReference>
<dbReference type="PROSITE" id="PS00748">
    <property type="entry name" value="F_ACTIN_CAPPING_A_1"/>
    <property type="match status" value="1"/>
</dbReference>
<dbReference type="PROSITE" id="PS00749">
    <property type="entry name" value="F_ACTIN_CAPPING_A_2"/>
    <property type="match status" value="1"/>
</dbReference>
<reference key="1">
    <citation type="submission" date="2006-09" db="EMBL/GenBank/DDBJ databases">
        <title>NISC comparative sequencing initiative.</title>
        <authorList>
            <person name="Antonellis A."/>
            <person name="Ayele K."/>
            <person name="Benjamin B."/>
            <person name="Blakesley R.W."/>
            <person name="Boakye A."/>
            <person name="Bouffard G.G."/>
            <person name="Brinkley C."/>
            <person name="Brooks S."/>
            <person name="Chu G."/>
            <person name="Coleman H."/>
            <person name="Engle J."/>
            <person name="Gestole M."/>
            <person name="Greene A."/>
            <person name="Guan X."/>
            <person name="Gupta J."/>
            <person name="Haghighi P."/>
            <person name="Han J."/>
            <person name="Hansen N."/>
            <person name="Ho S.-L."/>
            <person name="Hu P."/>
            <person name="Hunter G."/>
            <person name="Hurle B."/>
            <person name="Idol J.R."/>
            <person name="Kwong P."/>
            <person name="Laric P."/>
            <person name="Larson S."/>
            <person name="Lee-Lin S.-Q."/>
            <person name="Legaspi R."/>
            <person name="Madden M."/>
            <person name="Maduro Q.L."/>
            <person name="Maduro V.B."/>
            <person name="Margulies E.H."/>
            <person name="Masiello C."/>
            <person name="Maskeri B."/>
            <person name="McDowell J."/>
            <person name="Mojidi H.A."/>
            <person name="Mullikin J.C."/>
            <person name="Oestreicher J.S."/>
            <person name="Park M."/>
            <person name="Portnoy M.E."/>
            <person name="Prasad A."/>
            <person name="Puri O."/>
            <person name="Reddix-Dugue N."/>
            <person name="Schandler K."/>
            <person name="Schueler M.G."/>
            <person name="Sison C."/>
            <person name="Stantripop S."/>
            <person name="Stephen E."/>
            <person name="Taye A."/>
            <person name="Thomas J.W."/>
            <person name="Thomas P.J."/>
            <person name="Tsipouri V."/>
            <person name="Ung L."/>
            <person name="Vogt J.L."/>
            <person name="Wetherby K.D."/>
            <person name="Young A."/>
            <person name="Green E.D."/>
        </authorList>
    </citation>
    <scope>NUCLEOTIDE SEQUENCE [LARGE SCALE GENOMIC DNA]</scope>
</reference>
<accession>Q09YL0</accession>
<feature type="initiator methionine" description="Removed" evidence="2">
    <location>
        <position position="1"/>
    </location>
</feature>
<feature type="chain" id="PRO_0000260351" description="F-actin-capping protein subunit alpha-2">
    <location>
        <begin position="2"/>
        <end position="286"/>
    </location>
</feature>
<feature type="modified residue" description="N-acetylalanine" evidence="2">
    <location>
        <position position="2"/>
    </location>
</feature>
<feature type="modified residue" description="Phosphoserine" evidence="2">
    <location>
        <position position="9"/>
    </location>
</feature>
<sequence>MADLEEQLSDEEKVRIAAKFIIHAPPGEFNEVFNDVRLLLNNDNLLREGAAHAFAQYNLDQFTPVKIEGYEDQVLITEHGDLGNGKFLDPKNRICFKFDHLRKEATDPRPCEVENAIESWRTSVETALRAYVKEHYPNGVCTVYGKKIDGQQTIIACIESHQFQAKNFWNGRWRSEWKFTITPSTTQVVGILKIQVHYYEDGNVQLVSHKDIQDSLTVSNEVQTAKEFIKIVEAAENEYQTAISENYQTMSDTTFKALRRQLPVTRTKIDWNKILSYKIGKEMQNA</sequence>
<name>CAZA2_ATEGE</name>
<gene>
    <name type="primary">CAPZA2</name>
</gene>
<proteinExistence type="inferred from homology"/>